<name>NCAP_BEFVB</name>
<accession>Q65474</accession>
<protein>
    <recommendedName>
        <fullName>Nucleoprotein</fullName>
        <shortName>NP</shortName>
    </recommendedName>
    <alternativeName>
        <fullName>Nucleocapsid protein</fullName>
        <shortName>Protein N</shortName>
    </alternativeName>
</protein>
<feature type="chain" id="PRO_0000297608" description="Nucleoprotein">
    <location>
        <begin position="1"/>
        <end position="431"/>
    </location>
</feature>
<feature type="region of interest" description="Disordered" evidence="2">
    <location>
        <begin position="352"/>
        <end position="379"/>
    </location>
</feature>
<feature type="compositionally biased region" description="Acidic residues" evidence="2">
    <location>
        <begin position="361"/>
        <end position="377"/>
    </location>
</feature>
<sequence>MYCTLNKKEIKAVKPTDAIPPQYPKEFFINGNGKKPTLRVPQGKLDLPTVRELVFGGLERGELVLSHVIRYLYLVGERITEKLEGDWISFGVNIGRRNQEINVWNFYEVIIEDDQTIDGRRANNVDENDDVWLTLALLAYYRLGRSANQNHRNNLLIKLNAQIKGYRKDAPNIIDDVAVHGSWVTNSEFCKIAAGFDMFMNRFKNNKYAHVRFGTVASRYKDAAGLMALGHACDVTGLTIGEILDWIFVSNVGEDVVKIMEEGNEIDDPYSYMPYMMDMGISNKSPYSSISCPHIYTFLHLVGTLLTSERSKHARMVSEHNLQNIKMNAFVVSYVKSNKAALTKAFLKSEDRDYEKRQEDGSNDDEDEDESGDDDDFGAMPKSSDPMEWFIFLESNHFILPEKVTEFCIRECKKIQNARPNTIGKYLASIV</sequence>
<gene>
    <name type="primary">N</name>
</gene>
<organism>
    <name type="scientific">Bovine ephemeral fever virus (strain BB7721)</name>
    <name type="common">BEFV</name>
    <dbReference type="NCBI Taxonomy" id="928297"/>
    <lineage>
        <taxon>Viruses</taxon>
        <taxon>Riboviria</taxon>
        <taxon>Orthornavirae</taxon>
        <taxon>Negarnaviricota</taxon>
        <taxon>Haploviricotina</taxon>
        <taxon>Monjiviricetes</taxon>
        <taxon>Mononegavirales</taxon>
        <taxon>Rhabdoviridae</taxon>
        <taxon>Alpharhabdovirinae</taxon>
        <taxon>Ephemerovirus</taxon>
        <taxon>Ephemerovirus febris</taxon>
    </lineage>
</organism>
<reference key="1">
    <citation type="journal article" date="1994" name="J. Gen. Virol.">
        <title>Structural and antigenic analysis of the nucleoprotein of bovine ephemeral fever rhabdovirus.</title>
        <authorList>
            <person name="Walker P.J."/>
            <person name="Wang Y."/>
            <person name="Cowley J.A."/>
            <person name="McWilliam S.M."/>
            <person name="Prehaud C.J."/>
        </authorList>
    </citation>
    <scope>NUCLEOTIDE SEQUENCE [GENOMIC RNA]</scope>
</reference>
<evidence type="ECO:0000250" key="1"/>
<evidence type="ECO:0000256" key="2">
    <source>
        <dbReference type="SAM" id="MobiDB-lite"/>
    </source>
</evidence>
<evidence type="ECO:0000305" key="3"/>
<dbReference type="EMBL" id="U04166">
    <property type="protein sequence ID" value="AAA19450.1"/>
    <property type="molecule type" value="Genomic_RNA"/>
</dbReference>
<dbReference type="EMBL" id="AF234533">
    <property type="protein sequence ID" value="AAG10409.1"/>
    <property type="molecule type" value="Genomic_RNA"/>
</dbReference>
<dbReference type="RefSeq" id="NP_065398.1">
    <property type="nucleotide sequence ID" value="NC_002526.1"/>
</dbReference>
<dbReference type="SMR" id="Q65474"/>
<dbReference type="GeneID" id="911726"/>
<dbReference type="KEGG" id="vg:911726"/>
<dbReference type="Proteomes" id="UP000008588">
    <property type="component" value="Segment"/>
</dbReference>
<dbReference type="GO" id="GO:0019029">
    <property type="term" value="C:helical viral capsid"/>
    <property type="evidence" value="ECO:0007669"/>
    <property type="project" value="UniProtKB-KW"/>
</dbReference>
<dbReference type="GO" id="GO:0030430">
    <property type="term" value="C:host cell cytoplasm"/>
    <property type="evidence" value="ECO:0007669"/>
    <property type="project" value="UniProtKB-SubCell"/>
</dbReference>
<dbReference type="GO" id="GO:1990904">
    <property type="term" value="C:ribonucleoprotein complex"/>
    <property type="evidence" value="ECO:0007669"/>
    <property type="project" value="UniProtKB-KW"/>
</dbReference>
<dbReference type="GO" id="GO:0019013">
    <property type="term" value="C:viral nucleocapsid"/>
    <property type="evidence" value="ECO:0007669"/>
    <property type="project" value="UniProtKB-KW"/>
</dbReference>
<dbReference type="GO" id="GO:0003723">
    <property type="term" value="F:RNA binding"/>
    <property type="evidence" value="ECO:0007669"/>
    <property type="project" value="UniProtKB-KW"/>
</dbReference>
<dbReference type="Gene3D" id="1.10.3610.10">
    <property type="entry name" value="Nucleoprotein"/>
    <property type="match status" value="1"/>
</dbReference>
<dbReference type="Gene3D" id="1.10.3570.10">
    <property type="entry name" value="Rhabdovirus nucleocapsid protein like domain"/>
    <property type="match status" value="1"/>
</dbReference>
<dbReference type="InterPro" id="IPR000448">
    <property type="entry name" value="Rhabdo_ncapsid"/>
</dbReference>
<dbReference type="InterPro" id="IPR023331">
    <property type="entry name" value="Rhabdovirus_ncapsid_C"/>
</dbReference>
<dbReference type="InterPro" id="IPR023330">
    <property type="entry name" value="Rhabdovirus_ncapsid_N"/>
</dbReference>
<dbReference type="InterPro" id="IPR035961">
    <property type="entry name" value="Rhabdovirus_nucleoprotein-like"/>
</dbReference>
<dbReference type="Pfam" id="PF00945">
    <property type="entry name" value="Rhabdo_ncap"/>
    <property type="match status" value="1"/>
</dbReference>
<dbReference type="SUPFAM" id="SSF140809">
    <property type="entry name" value="Rhabdovirus nucleoprotein-like"/>
    <property type="match status" value="1"/>
</dbReference>
<proteinExistence type="inferred from homology"/>
<comment type="function">
    <text evidence="1">Encapsidates the genome, protecting it from nucleases. If expressed without protein P it binds non-specifically RNA and therefore can bind it's own mRNA. Interaction with protein P abolishes any non-specific RNA binding, and prevents phosphorylation. The soluble N-P complex encapsidates specifically the genomic RNA, with protein N protecting the genome like a pearl necklace. The encapsidated genomic RNA is termed the nucleocapsid (NC) and serves as template for viral transcription and replication. Protein N binds protein P in the NC through a different interaction, and can be phosphorylated. Subsequent viral replication is dependent on intracellular concentration of newly synthesized protein N. During replication, encapsidation by protein N is coupled to RNA synthesis and all replicative products are resistant to nucleases (By similarity).</text>
</comment>
<comment type="subunit">
    <text evidence="1">Homomultimerizes to form the nucleocapsid. Binds to viral genomic RNA (By similarity).</text>
</comment>
<comment type="subcellular location">
    <subcellularLocation>
        <location>Virion</location>
    </subcellularLocation>
    <subcellularLocation>
        <location evidence="1">Host cytoplasm</location>
    </subcellularLocation>
</comment>
<comment type="similarity">
    <text evidence="3">Belongs to the ephemerovirus nucleocapsid protein family.</text>
</comment>
<keyword id="KW-0167">Capsid protein</keyword>
<keyword id="KW-1139">Helical capsid protein</keyword>
<keyword id="KW-1035">Host cytoplasm</keyword>
<keyword id="KW-0597">Phosphoprotein</keyword>
<keyword id="KW-1185">Reference proteome</keyword>
<keyword id="KW-0687">Ribonucleoprotein</keyword>
<keyword id="KW-0694">RNA-binding</keyword>
<keyword id="KW-0543">Viral nucleoprotein</keyword>
<keyword id="KW-0946">Virion</keyword>
<organismHost>
    <name type="scientific">Bos taurus</name>
    <name type="common">Bovine</name>
    <dbReference type="NCBI Taxonomy" id="9913"/>
</organismHost>
<organismHost>
    <name type="scientific">Bubalus bubalis</name>
    <name type="common">Domestic water buffalo</name>
    <dbReference type="NCBI Taxonomy" id="89462"/>
</organismHost>
<organismHost>
    <name type="scientific">Culicoides</name>
    <dbReference type="NCBI Taxonomy" id="58271"/>
</organismHost>
<organismHost>
    <name type="scientific">Syncerus caffer</name>
    <name type="common">African buffalo</name>
    <dbReference type="NCBI Taxonomy" id="9970"/>
</organismHost>